<gene>
    <name evidence="1" type="primary">hscB</name>
    <name type="ordered locus">VP0599</name>
</gene>
<accession>Q87S25</accession>
<name>HSCB_VIBPA</name>
<sequence>MNHFELFGLPSQFQLDGSLLSSKFRELQKRFHPDNFATASERDRLMSVQKAAQINDAYQVLKHPISRAEYILAEQGMEIRGEQQTMQDPMFLMEQMELREELEDIADCSDPESALFDFDSKVSKMYKQHLASVEQELNDGLWAEAADRVRKLKFIAKLKNEIELVEDKLLG</sequence>
<feature type="chain" id="PRO_0000070994" description="Co-chaperone protein HscB homolog">
    <location>
        <begin position="1"/>
        <end position="171"/>
    </location>
</feature>
<feature type="domain" description="J" evidence="1">
    <location>
        <begin position="2"/>
        <end position="74"/>
    </location>
</feature>
<comment type="function">
    <text evidence="1">Co-chaperone involved in the maturation of iron-sulfur cluster-containing proteins. Seems to help targeting proteins to be folded toward HscA.</text>
</comment>
<comment type="subunit">
    <text evidence="1">Interacts with HscA and stimulates its ATPase activity.</text>
</comment>
<comment type="similarity">
    <text evidence="1">Belongs to the HscB family.</text>
</comment>
<evidence type="ECO:0000255" key="1">
    <source>
        <dbReference type="HAMAP-Rule" id="MF_00682"/>
    </source>
</evidence>
<keyword id="KW-0143">Chaperone</keyword>
<organism>
    <name type="scientific">Vibrio parahaemolyticus serotype O3:K6 (strain RIMD 2210633)</name>
    <dbReference type="NCBI Taxonomy" id="223926"/>
    <lineage>
        <taxon>Bacteria</taxon>
        <taxon>Pseudomonadati</taxon>
        <taxon>Pseudomonadota</taxon>
        <taxon>Gammaproteobacteria</taxon>
        <taxon>Vibrionales</taxon>
        <taxon>Vibrionaceae</taxon>
        <taxon>Vibrio</taxon>
    </lineage>
</organism>
<protein>
    <recommendedName>
        <fullName evidence="1">Co-chaperone protein HscB homolog</fullName>
    </recommendedName>
</protein>
<reference key="1">
    <citation type="journal article" date="2003" name="Lancet">
        <title>Genome sequence of Vibrio parahaemolyticus: a pathogenic mechanism distinct from that of V. cholerae.</title>
        <authorList>
            <person name="Makino K."/>
            <person name="Oshima K."/>
            <person name="Kurokawa K."/>
            <person name="Yokoyama K."/>
            <person name="Uda T."/>
            <person name="Tagomori K."/>
            <person name="Iijima Y."/>
            <person name="Najima M."/>
            <person name="Nakano M."/>
            <person name="Yamashita A."/>
            <person name="Kubota Y."/>
            <person name="Kimura S."/>
            <person name="Yasunaga T."/>
            <person name="Honda T."/>
            <person name="Shinagawa H."/>
            <person name="Hattori M."/>
            <person name="Iida T."/>
        </authorList>
    </citation>
    <scope>NUCLEOTIDE SEQUENCE [LARGE SCALE GENOMIC DNA]</scope>
    <source>
        <strain>RIMD 2210633</strain>
    </source>
</reference>
<dbReference type="EMBL" id="BA000031">
    <property type="protein sequence ID" value="BAC58862.1"/>
    <property type="molecule type" value="Genomic_DNA"/>
</dbReference>
<dbReference type="RefSeq" id="NP_796978.1">
    <property type="nucleotide sequence ID" value="NC_004603.1"/>
</dbReference>
<dbReference type="RefSeq" id="WP_005460241.1">
    <property type="nucleotide sequence ID" value="NC_004603.1"/>
</dbReference>
<dbReference type="SMR" id="Q87S25"/>
<dbReference type="GeneID" id="1188074"/>
<dbReference type="KEGG" id="vpa:VP0599"/>
<dbReference type="PATRIC" id="fig|223926.6.peg.568"/>
<dbReference type="eggNOG" id="COG1076">
    <property type="taxonomic scope" value="Bacteria"/>
</dbReference>
<dbReference type="HOGENOM" id="CLU_068529_2_0_6"/>
<dbReference type="Proteomes" id="UP000002493">
    <property type="component" value="Chromosome 1"/>
</dbReference>
<dbReference type="GO" id="GO:1990230">
    <property type="term" value="C:iron-sulfur cluster transfer complex"/>
    <property type="evidence" value="ECO:0007669"/>
    <property type="project" value="TreeGrafter"/>
</dbReference>
<dbReference type="GO" id="GO:0001671">
    <property type="term" value="F:ATPase activator activity"/>
    <property type="evidence" value="ECO:0007669"/>
    <property type="project" value="InterPro"/>
</dbReference>
<dbReference type="GO" id="GO:0051087">
    <property type="term" value="F:protein-folding chaperone binding"/>
    <property type="evidence" value="ECO:0007669"/>
    <property type="project" value="InterPro"/>
</dbReference>
<dbReference type="GO" id="GO:0044571">
    <property type="term" value="P:[2Fe-2S] cluster assembly"/>
    <property type="evidence" value="ECO:0007669"/>
    <property type="project" value="InterPro"/>
</dbReference>
<dbReference type="GO" id="GO:0051259">
    <property type="term" value="P:protein complex oligomerization"/>
    <property type="evidence" value="ECO:0007669"/>
    <property type="project" value="InterPro"/>
</dbReference>
<dbReference type="GO" id="GO:0006457">
    <property type="term" value="P:protein folding"/>
    <property type="evidence" value="ECO:0007669"/>
    <property type="project" value="UniProtKB-UniRule"/>
</dbReference>
<dbReference type="CDD" id="cd06257">
    <property type="entry name" value="DnaJ"/>
    <property type="match status" value="1"/>
</dbReference>
<dbReference type="Gene3D" id="1.10.287.110">
    <property type="entry name" value="DnaJ domain"/>
    <property type="match status" value="1"/>
</dbReference>
<dbReference type="Gene3D" id="1.20.1280.20">
    <property type="entry name" value="HscB, C-terminal domain"/>
    <property type="match status" value="1"/>
</dbReference>
<dbReference type="HAMAP" id="MF_00682">
    <property type="entry name" value="HscB"/>
    <property type="match status" value="1"/>
</dbReference>
<dbReference type="InterPro" id="IPR001623">
    <property type="entry name" value="DnaJ_domain"/>
</dbReference>
<dbReference type="InterPro" id="IPR004640">
    <property type="entry name" value="HscB"/>
</dbReference>
<dbReference type="InterPro" id="IPR036386">
    <property type="entry name" value="HscB_C_sf"/>
</dbReference>
<dbReference type="InterPro" id="IPR009073">
    <property type="entry name" value="HscB_oligo_C"/>
</dbReference>
<dbReference type="InterPro" id="IPR036869">
    <property type="entry name" value="J_dom_sf"/>
</dbReference>
<dbReference type="NCBIfam" id="TIGR00714">
    <property type="entry name" value="hscB"/>
    <property type="match status" value="1"/>
</dbReference>
<dbReference type="NCBIfam" id="NF003449">
    <property type="entry name" value="PRK05014.1"/>
    <property type="match status" value="1"/>
</dbReference>
<dbReference type="PANTHER" id="PTHR14021">
    <property type="entry name" value="IRON-SULFUR CLUSTER CO-CHAPERONE PROTEIN HSCB"/>
    <property type="match status" value="1"/>
</dbReference>
<dbReference type="PANTHER" id="PTHR14021:SF15">
    <property type="entry name" value="IRON-SULFUR CLUSTER CO-CHAPERONE PROTEIN HSCB"/>
    <property type="match status" value="1"/>
</dbReference>
<dbReference type="Pfam" id="PF07743">
    <property type="entry name" value="HSCB_C"/>
    <property type="match status" value="1"/>
</dbReference>
<dbReference type="SMART" id="SM00271">
    <property type="entry name" value="DnaJ"/>
    <property type="match status" value="1"/>
</dbReference>
<dbReference type="SUPFAM" id="SSF46565">
    <property type="entry name" value="Chaperone J-domain"/>
    <property type="match status" value="1"/>
</dbReference>
<dbReference type="SUPFAM" id="SSF47144">
    <property type="entry name" value="HSC20 (HSCB), C-terminal oligomerisation domain"/>
    <property type="match status" value="1"/>
</dbReference>
<dbReference type="PROSITE" id="PS50076">
    <property type="entry name" value="DNAJ_2"/>
    <property type="match status" value="1"/>
</dbReference>
<proteinExistence type="inferred from homology"/>